<protein>
    <recommendedName>
        <fullName>FAD assembly factor SdhE</fullName>
    </recommendedName>
</protein>
<proteinExistence type="inferred from homology"/>
<reference key="1">
    <citation type="journal article" date="2001" name="Proc. Natl. Acad. Sci. U.S.A.">
        <title>Complete genomic sequence of Pasteurella multocida Pm70.</title>
        <authorList>
            <person name="May B.J."/>
            <person name="Zhang Q."/>
            <person name="Li L.L."/>
            <person name="Paustian M.L."/>
            <person name="Whittam T.S."/>
            <person name="Kapur V."/>
        </authorList>
    </citation>
    <scope>NUCLEOTIDE SEQUENCE [LARGE SCALE GENOMIC DNA]</scope>
    <source>
        <strain>Pm70</strain>
    </source>
</reference>
<comment type="function">
    <text evidence="1">An FAD assembly protein, which accelerates covalent attachment of the cofactor into other proteins. Plays an essential role in the assembly of succinate dehydrogenase (SDH, respiratory complex II), an enzyme complex that is a component of both the tricarboxylic acid cycle and the electron transport chain, and which couples the oxidation of succinate to fumarate with the reduction of ubiquinone (coenzyme Q) to ubiquinol. Required for flavinylation (covalent attachment of FAD) of the flavoprotein subunit SdhA of SDH and other flavinylated proteins as well.</text>
</comment>
<comment type="subcellular location">
    <subcellularLocation>
        <location evidence="1">Cytoplasm</location>
    </subcellularLocation>
</comment>
<comment type="similarity">
    <text evidence="2">Belongs to the SdhE FAD assembly factor family.</text>
</comment>
<dbReference type="EMBL" id="AE004439">
    <property type="protein sequence ID" value="AAK03874.1"/>
    <property type="molecule type" value="Genomic_DNA"/>
</dbReference>
<dbReference type="RefSeq" id="WP_005718978.1">
    <property type="nucleotide sequence ID" value="NC_002663.1"/>
</dbReference>
<dbReference type="SMR" id="Q9CK44"/>
<dbReference type="STRING" id="272843.PM1790"/>
<dbReference type="EnsemblBacteria" id="AAK03874">
    <property type="protein sequence ID" value="AAK03874"/>
    <property type="gene ID" value="PM1790"/>
</dbReference>
<dbReference type="KEGG" id="pmu:PM1790"/>
<dbReference type="HOGENOM" id="CLU_103054_2_2_6"/>
<dbReference type="OrthoDB" id="9180899at2"/>
<dbReference type="Proteomes" id="UP000000809">
    <property type="component" value="Chromosome"/>
</dbReference>
<dbReference type="GO" id="GO:0005737">
    <property type="term" value="C:cytoplasm"/>
    <property type="evidence" value="ECO:0007669"/>
    <property type="project" value="UniProtKB-SubCell"/>
</dbReference>
<dbReference type="GO" id="GO:0006105">
    <property type="term" value="P:succinate metabolic process"/>
    <property type="evidence" value="ECO:0007669"/>
    <property type="project" value="TreeGrafter"/>
</dbReference>
<dbReference type="Gene3D" id="1.10.150.250">
    <property type="entry name" value="Flavinator of succinate dehydrogenase"/>
    <property type="match status" value="1"/>
</dbReference>
<dbReference type="InterPro" id="IPR005631">
    <property type="entry name" value="SDH"/>
</dbReference>
<dbReference type="InterPro" id="IPR036714">
    <property type="entry name" value="SDH_sf"/>
</dbReference>
<dbReference type="InterPro" id="IPR050531">
    <property type="entry name" value="SdhE_FAD_assembly_factor"/>
</dbReference>
<dbReference type="PANTHER" id="PTHR39585">
    <property type="entry name" value="FAD ASSEMBLY FACTOR SDHE"/>
    <property type="match status" value="1"/>
</dbReference>
<dbReference type="PANTHER" id="PTHR39585:SF1">
    <property type="entry name" value="FAD ASSEMBLY FACTOR SDHE"/>
    <property type="match status" value="1"/>
</dbReference>
<dbReference type="Pfam" id="PF03937">
    <property type="entry name" value="Sdh5"/>
    <property type="match status" value="1"/>
</dbReference>
<dbReference type="SUPFAM" id="SSF109910">
    <property type="entry name" value="YgfY-like"/>
    <property type="match status" value="1"/>
</dbReference>
<sequence length="84" mass="10159">MTQYNKLRIEWDCRRGMLELDNVIMPFYRQHFDALSDTQKDTFIRLLACSDLQLFSWFFNRGMATDPQLQQMVDYIQKTLKLTD</sequence>
<gene>
    <name type="primary">sdhE</name>
    <name type="ordered locus">PM1790</name>
</gene>
<keyword id="KW-0143">Chaperone</keyword>
<keyword id="KW-0963">Cytoplasm</keyword>
<keyword id="KW-1185">Reference proteome</keyword>
<organism>
    <name type="scientific">Pasteurella multocida (strain Pm70)</name>
    <dbReference type="NCBI Taxonomy" id="272843"/>
    <lineage>
        <taxon>Bacteria</taxon>
        <taxon>Pseudomonadati</taxon>
        <taxon>Pseudomonadota</taxon>
        <taxon>Gammaproteobacteria</taxon>
        <taxon>Pasteurellales</taxon>
        <taxon>Pasteurellaceae</taxon>
        <taxon>Pasteurella</taxon>
    </lineage>
</organism>
<accession>Q9CK44</accession>
<evidence type="ECO:0000250" key="1">
    <source>
        <dbReference type="UniProtKB" id="G4V4G2"/>
    </source>
</evidence>
<evidence type="ECO:0000305" key="2"/>
<feature type="chain" id="PRO_0000214408" description="FAD assembly factor SdhE">
    <location>
        <begin position="1"/>
        <end position="84"/>
    </location>
</feature>
<name>SDHE_PASMU</name>